<gene>
    <name evidence="1" type="primary">hutH</name>
    <name type="ordered locus">BALH_3287</name>
</gene>
<dbReference type="EC" id="4.3.1.3" evidence="1"/>
<dbReference type="EMBL" id="CP000485">
    <property type="protein sequence ID" value="ABK86532.1"/>
    <property type="molecule type" value="Genomic_DNA"/>
</dbReference>
<dbReference type="RefSeq" id="WP_000631843.1">
    <property type="nucleotide sequence ID" value="NC_008600.1"/>
</dbReference>
<dbReference type="SMR" id="A0RH39"/>
<dbReference type="KEGG" id="btl:BALH_3287"/>
<dbReference type="HOGENOM" id="CLU_014801_4_0_9"/>
<dbReference type="UniPathway" id="UPA00379">
    <property type="reaction ID" value="UER00549"/>
</dbReference>
<dbReference type="GO" id="GO:0005737">
    <property type="term" value="C:cytoplasm"/>
    <property type="evidence" value="ECO:0007669"/>
    <property type="project" value="UniProtKB-SubCell"/>
</dbReference>
<dbReference type="GO" id="GO:0004397">
    <property type="term" value="F:histidine ammonia-lyase activity"/>
    <property type="evidence" value="ECO:0007669"/>
    <property type="project" value="UniProtKB-UniRule"/>
</dbReference>
<dbReference type="GO" id="GO:0019556">
    <property type="term" value="P:L-histidine catabolic process to glutamate and formamide"/>
    <property type="evidence" value="ECO:0007669"/>
    <property type="project" value="UniProtKB-UniPathway"/>
</dbReference>
<dbReference type="GO" id="GO:0019557">
    <property type="term" value="P:L-histidine catabolic process to glutamate and formate"/>
    <property type="evidence" value="ECO:0007669"/>
    <property type="project" value="UniProtKB-UniPathway"/>
</dbReference>
<dbReference type="CDD" id="cd00332">
    <property type="entry name" value="PAL-HAL"/>
    <property type="match status" value="1"/>
</dbReference>
<dbReference type="FunFam" id="1.10.275.10:FF:000008">
    <property type="entry name" value="Histidine ammonia-lyase"/>
    <property type="match status" value="1"/>
</dbReference>
<dbReference type="FunFam" id="1.20.200.10:FF:000003">
    <property type="entry name" value="Histidine ammonia-lyase"/>
    <property type="match status" value="1"/>
</dbReference>
<dbReference type="Gene3D" id="1.20.200.10">
    <property type="entry name" value="Fumarase/aspartase (Central domain)"/>
    <property type="match status" value="1"/>
</dbReference>
<dbReference type="Gene3D" id="1.10.275.10">
    <property type="entry name" value="Fumarase/aspartase (N-terminal domain)"/>
    <property type="match status" value="1"/>
</dbReference>
<dbReference type="HAMAP" id="MF_00229">
    <property type="entry name" value="His_ammonia_lyase"/>
    <property type="match status" value="1"/>
</dbReference>
<dbReference type="InterPro" id="IPR001106">
    <property type="entry name" value="Aromatic_Lyase"/>
</dbReference>
<dbReference type="InterPro" id="IPR024083">
    <property type="entry name" value="Fumarase/histidase_N"/>
</dbReference>
<dbReference type="InterPro" id="IPR005921">
    <property type="entry name" value="HutH"/>
</dbReference>
<dbReference type="InterPro" id="IPR008948">
    <property type="entry name" value="L-Aspartase-like"/>
</dbReference>
<dbReference type="InterPro" id="IPR022313">
    <property type="entry name" value="Phe/His_NH3-lyase_AS"/>
</dbReference>
<dbReference type="NCBIfam" id="TIGR01225">
    <property type="entry name" value="hutH"/>
    <property type="match status" value="1"/>
</dbReference>
<dbReference type="NCBIfam" id="NF006871">
    <property type="entry name" value="PRK09367.1"/>
    <property type="match status" value="1"/>
</dbReference>
<dbReference type="PANTHER" id="PTHR10362">
    <property type="entry name" value="HISTIDINE AMMONIA-LYASE"/>
    <property type="match status" value="1"/>
</dbReference>
<dbReference type="Pfam" id="PF00221">
    <property type="entry name" value="Lyase_aromatic"/>
    <property type="match status" value="1"/>
</dbReference>
<dbReference type="SUPFAM" id="SSF48557">
    <property type="entry name" value="L-aspartase-like"/>
    <property type="match status" value="1"/>
</dbReference>
<dbReference type="PROSITE" id="PS00488">
    <property type="entry name" value="PAL_HISTIDASE"/>
    <property type="match status" value="1"/>
</dbReference>
<reference key="1">
    <citation type="journal article" date="2007" name="J. Bacteriol.">
        <title>The complete genome sequence of Bacillus thuringiensis Al Hakam.</title>
        <authorList>
            <person name="Challacombe J.F."/>
            <person name="Altherr M.R."/>
            <person name="Xie G."/>
            <person name="Bhotika S.S."/>
            <person name="Brown N."/>
            <person name="Bruce D."/>
            <person name="Campbell C.S."/>
            <person name="Campbell M.L."/>
            <person name="Chen J."/>
            <person name="Chertkov O."/>
            <person name="Cleland C."/>
            <person name="Dimitrijevic M."/>
            <person name="Doggett N.A."/>
            <person name="Fawcett J.J."/>
            <person name="Glavina T."/>
            <person name="Goodwin L.A."/>
            <person name="Green L.D."/>
            <person name="Han C.S."/>
            <person name="Hill K.K."/>
            <person name="Hitchcock P."/>
            <person name="Jackson P.J."/>
            <person name="Keim P."/>
            <person name="Kewalramani A.R."/>
            <person name="Longmire J."/>
            <person name="Lucas S."/>
            <person name="Malfatti S."/>
            <person name="Martinez D."/>
            <person name="McMurry K."/>
            <person name="Meincke L.J."/>
            <person name="Misra M."/>
            <person name="Moseman B.L."/>
            <person name="Mundt M."/>
            <person name="Munk A.C."/>
            <person name="Okinaka R.T."/>
            <person name="Parson-Quintana B."/>
            <person name="Reilly L.P."/>
            <person name="Richardson P."/>
            <person name="Robinson D.L."/>
            <person name="Saunders E."/>
            <person name="Tapia R."/>
            <person name="Tesmer J.G."/>
            <person name="Thayer N."/>
            <person name="Thompson L.S."/>
            <person name="Tice H."/>
            <person name="Ticknor L.O."/>
            <person name="Wills P.L."/>
            <person name="Gilna P."/>
            <person name="Brettin T.S."/>
        </authorList>
    </citation>
    <scope>NUCLEOTIDE SEQUENCE [LARGE SCALE GENOMIC DNA]</scope>
    <source>
        <strain>Al Hakam</strain>
    </source>
</reference>
<comment type="catalytic activity">
    <reaction evidence="1">
        <text>L-histidine = trans-urocanate + NH4(+)</text>
        <dbReference type="Rhea" id="RHEA:21232"/>
        <dbReference type="ChEBI" id="CHEBI:17771"/>
        <dbReference type="ChEBI" id="CHEBI:28938"/>
        <dbReference type="ChEBI" id="CHEBI:57595"/>
        <dbReference type="EC" id="4.3.1.3"/>
    </reaction>
</comment>
<comment type="pathway">
    <text evidence="1">Amino-acid degradation; L-histidine degradation into L-glutamate; N-formimidoyl-L-glutamate from L-histidine: step 1/3.</text>
</comment>
<comment type="subcellular location">
    <subcellularLocation>
        <location evidence="1">Cytoplasm</location>
    </subcellularLocation>
</comment>
<comment type="PTM">
    <text evidence="1">Contains an active site 4-methylidene-imidazol-5-one (MIO), which is formed autocatalytically by cyclization and dehydration of residues Ala-Ser-Gly.</text>
</comment>
<comment type="similarity">
    <text evidence="1">Belongs to the PAL/histidase family.</text>
</comment>
<feature type="chain" id="PRO_1000021541" description="Histidine ammonia-lyase">
    <location>
        <begin position="1"/>
        <end position="505"/>
    </location>
</feature>
<feature type="modified residue" description="2,3-didehydroalanine (Ser)" evidence="1">
    <location>
        <position position="142"/>
    </location>
</feature>
<feature type="cross-link" description="5-imidazolinone (Ala-Gly)" evidence="1">
    <location>
        <begin position="141"/>
        <end position="143"/>
    </location>
</feature>
<organism>
    <name type="scientific">Bacillus thuringiensis (strain Al Hakam)</name>
    <dbReference type="NCBI Taxonomy" id="412694"/>
    <lineage>
        <taxon>Bacteria</taxon>
        <taxon>Bacillati</taxon>
        <taxon>Bacillota</taxon>
        <taxon>Bacilli</taxon>
        <taxon>Bacillales</taxon>
        <taxon>Bacillaceae</taxon>
        <taxon>Bacillus</taxon>
        <taxon>Bacillus cereus group</taxon>
    </lineage>
</organism>
<evidence type="ECO:0000255" key="1">
    <source>
        <dbReference type="HAMAP-Rule" id="MF_00229"/>
    </source>
</evidence>
<accession>A0RH39</accession>
<protein>
    <recommendedName>
        <fullName evidence="1">Histidine ammonia-lyase</fullName>
        <shortName evidence="1">Histidase</shortName>
        <ecNumber evidence="1">4.3.1.3</ecNumber>
    </recommendedName>
</protein>
<sequence>MITLTGHTLTIEEMKRLLLEGEGVTACPNSMQKVAECREVVEKIVEDGKVVYGITTGFGKFSDVLIQKDDVKALQHNLIQSHACGIGDPFPEEVSRGMLILRANTMLKGVSGVRPLVVNMLLEFVNRKIHPVVPQQGSLGASGDLAPLSHLALVLLGEGEVFYKGKRVHAMVALTEEGLEPIELEAKEGLALINGTQAMTAQGVLSYIEAEATSYQAELIASMTIEGLQGIIDAFDENVHKTRGYKEQVEVASRIRDILHDSKLTTKQGELRVQDAYSLRCIPQVHGASWQVLNYVKEKLEIEMNAATDNPLIFDGGEKVISGGNFHGQPIAFAMDFLKVGMAELANISERRIERLVNPQLNDLPPFLSPEPGLQSGAMIMQYAAASLVSENKTLAHPASVDSIPSSANQEDHVSMGTIASRHAHQIIQNVRRVLSVEMICAMQAAEYRGIENMSTVTKSFYHQGRQQVPSITNDRIFSTDIENITHWLKTNYSIKERLDVNAAL</sequence>
<keyword id="KW-0963">Cytoplasm</keyword>
<keyword id="KW-0369">Histidine metabolism</keyword>
<keyword id="KW-0456">Lyase</keyword>
<name>HUTH_BACAH</name>
<proteinExistence type="inferred from homology"/>